<protein>
    <recommendedName>
        <fullName evidence="1">F420-dependent methylenetetrahydromethanopterin dehydrogenase</fullName>
        <shortName evidence="1">MTD</shortName>
        <ecNumber evidence="1">1.5.98.1</ecNumber>
    </recommendedName>
    <alternativeName>
        <fullName evidence="1">Coenzyme F420-dependent N5,N10-methylenetetrahydromethanopterin dehydrogenase</fullName>
    </alternativeName>
</protein>
<dbReference type="EC" id="1.5.98.1" evidence="1"/>
<dbReference type="EMBL" id="BX950229">
    <property type="protein sequence ID" value="CAF29928.1"/>
    <property type="molecule type" value="Genomic_DNA"/>
</dbReference>
<dbReference type="RefSeq" id="WP_011170316.1">
    <property type="nucleotide sequence ID" value="NC_005791.1"/>
</dbReference>
<dbReference type="SMR" id="Q6M099"/>
<dbReference type="STRING" id="267377.MMP0372"/>
<dbReference type="EnsemblBacteria" id="CAF29928">
    <property type="protein sequence ID" value="CAF29928"/>
    <property type="gene ID" value="MMP0372"/>
</dbReference>
<dbReference type="KEGG" id="mmp:MMP0372"/>
<dbReference type="PATRIC" id="fig|267377.15.peg.376"/>
<dbReference type="eggNOG" id="arCOG04382">
    <property type="taxonomic scope" value="Archaea"/>
</dbReference>
<dbReference type="HOGENOM" id="CLU_1006890_0_0_2"/>
<dbReference type="OrthoDB" id="49844at2157"/>
<dbReference type="UniPathway" id="UPA00640">
    <property type="reaction ID" value="UER00695"/>
</dbReference>
<dbReference type="Proteomes" id="UP000000590">
    <property type="component" value="Chromosome"/>
</dbReference>
<dbReference type="GO" id="GO:0008901">
    <property type="term" value="F:ferredoxin hydrogenase activity"/>
    <property type="evidence" value="ECO:0007669"/>
    <property type="project" value="InterPro"/>
</dbReference>
<dbReference type="GO" id="GO:0030268">
    <property type="term" value="F:methylenetetrahydromethanopterin dehydrogenase activity"/>
    <property type="evidence" value="ECO:0007669"/>
    <property type="project" value="UniProtKB-UniRule"/>
</dbReference>
<dbReference type="GO" id="GO:0019386">
    <property type="term" value="P:methanogenesis, from carbon dioxide"/>
    <property type="evidence" value="ECO:0007669"/>
    <property type="project" value="UniProtKB-UniRule"/>
</dbReference>
<dbReference type="GO" id="GO:0006730">
    <property type="term" value="P:one-carbon metabolic process"/>
    <property type="evidence" value="ECO:0007669"/>
    <property type="project" value="UniProtKB-UniRule"/>
</dbReference>
<dbReference type="Gene3D" id="6.10.140.120">
    <property type="match status" value="1"/>
</dbReference>
<dbReference type="Gene3D" id="3.40.50.10830">
    <property type="entry name" value="F420-dependent methylenetetrahydromethanopterin dehydrogenase (MTD)"/>
    <property type="match status" value="1"/>
</dbReference>
<dbReference type="HAMAP" id="MF_00058">
    <property type="entry name" value="MTD"/>
    <property type="match status" value="1"/>
</dbReference>
<dbReference type="InterPro" id="IPR002844">
    <property type="entry name" value="MTD"/>
</dbReference>
<dbReference type="InterPro" id="IPR036080">
    <property type="entry name" value="MTD_sf"/>
</dbReference>
<dbReference type="NCBIfam" id="NF002162">
    <property type="entry name" value="PRK00994.1"/>
    <property type="match status" value="1"/>
</dbReference>
<dbReference type="Pfam" id="PF01993">
    <property type="entry name" value="MTD"/>
    <property type="match status" value="1"/>
</dbReference>
<dbReference type="PIRSF" id="PIRSF005627">
    <property type="entry name" value="MTD"/>
    <property type="match status" value="1"/>
</dbReference>
<dbReference type="SUPFAM" id="SSF102324">
    <property type="entry name" value="F420-dependent methylenetetrahydromethanopterin dehydrogenase (MTD)"/>
    <property type="match status" value="1"/>
</dbReference>
<proteinExistence type="inferred from homology"/>
<name>MTD_METMP</name>
<accession>Q6M099</accession>
<gene>
    <name evidence="1" type="primary">mtd</name>
    <name type="ordered locus">MMP0372</name>
</gene>
<comment type="function">
    <text evidence="1">Catalyzes the reversible reduction of methenyl-H(4)MPT(+) to methylene-H(4)MPT.</text>
</comment>
<comment type="catalytic activity">
    <reaction evidence="1">
        <text>5,10-methylenetetrahydromethanopterin + oxidized coenzyme F420-(gamma-L-Glu)(n) + 2 H(+) = 5,10-methenyl-5,6,7,8-tetrahydromethanopterin + reduced coenzyme F420-(gamma-L-Glu)(n)</text>
        <dbReference type="Rhea" id="RHEA:16721"/>
        <dbReference type="Rhea" id="RHEA-COMP:12939"/>
        <dbReference type="Rhea" id="RHEA-COMP:14378"/>
        <dbReference type="ChEBI" id="CHEBI:15378"/>
        <dbReference type="ChEBI" id="CHEBI:57818"/>
        <dbReference type="ChEBI" id="CHEBI:58337"/>
        <dbReference type="ChEBI" id="CHEBI:133980"/>
        <dbReference type="ChEBI" id="CHEBI:139511"/>
        <dbReference type="EC" id="1.5.98.1"/>
    </reaction>
</comment>
<comment type="pathway">
    <text evidence="1">One-carbon metabolism; methanogenesis from CO(2); 5,10-methylene-5,6,7,8-tetrahydromethanopterin from 5,10-methenyl-5,6,7,8-tetrahydromethanopterin (coenzyme F420 route): step 1/1.</text>
</comment>
<comment type="similarity">
    <text evidence="1">Belongs to the MTD family.</text>
</comment>
<sequence>MVVKIGILKCGNIGMSPVVDLCLDERADRNDIDVRVLGSGAKMGPEQVEEVAKKMVEEIKPDFIVYIGPNPAAPGPKKAREILSAGGIPAVIIGDAPGIKDKDAMAEEGLGYVLIKCDPMIGARRQFLDPVEMAMFNADVIRVLAGTGALRVVQNAIDDMVFAVEEGKEIPLPKIVITEQKAVEAMDFANPYAKAKAMAAFVMAEKVADIDVKGCFMTKEMEKYIPIVASAHETIRYAAKLVDEARELEKATDAVSRKPHAGAGKILNKCKLMEKPE</sequence>
<evidence type="ECO:0000255" key="1">
    <source>
        <dbReference type="HAMAP-Rule" id="MF_00058"/>
    </source>
</evidence>
<organism>
    <name type="scientific">Methanococcus maripaludis (strain DSM 14266 / JCM 13030 / NBRC 101832 / S2 / LL)</name>
    <dbReference type="NCBI Taxonomy" id="267377"/>
    <lineage>
        <taxon>Archaea</taxon>
        <taxon>Methanobacteriati</taxon>
        <taxon>Methanobacteriota</taxon>
        <taxon>Methanomada group</taxon>
        <taxon>Methanococci</taxon>
        <taxon>Methanococcales</taxon>
        <taxon>Methanococcaceae</taxon>
        <taxon>Methanococcus</taxon>
    </lineage>
</organism>
<keyword id="KW-0484">Methanogenesis</keyword>
<keyword id="KW-0554">One-carbon metabolism</keyword>
<keyword id="KW-0560">Oxidoreductase</keyword>
<keyword id="KW-1185">Reference proteome</keyword>
<feature type="chain" id="PRO_1000007673" description="F420-dependent methylenetetrahydromethanopterin dehydrogenase">
    <location>
        <begin position="1"/>
        <end position="277"/>
    </location>
</feature>
<reference key="1">
    <citation type="journal article" date="2004" name="J. Bacteriol.">
        <title>Complete genome sequence of the genetically tractable hydrogenotrophic methanogen Methanococcus maripaludis.</title>
        <authorList>
            <person name="Hendrickson E.L."/>
            <person name="Kaul R."/>
            <person name="Zhou Y."/>
            <person name="Bovee D."/>
            <person name="Chapman P."/>
            <person name="Chung J."/>
            <person name="Conway de Macario E."/>
            <person name="Dodsworth J.A."/>
            <person name="Gillett W."/>
            <person name="Graham D.E."/>
            <person name="Hackett M."/>
            <person name="Haydock A.K."/>
            <person name="Kang A."/>
            <person name="Land M.L."/>
            <person name="Levy R."/>
            <person name="Lie T.J."/>
            <person name="Major T.A."/>
            <person name="Moore B.C."/>
            <person name="Porat I."/>
            <person name="Palmeiri A."/>
            <person name="Rouse G."/>
            <person name="Saenphimmachak C."/>
            <person name="Soell D."/>
            <person name="Van Dien S."/>
            <person name="Wang T."/>
            <person name="Whitman W.B."/>
            <person name="Xia Q."/>
            <person name="Zhang Y."/>
            <person name="Larimer F.W."/>
            <person name="Olson M.V."/>
            <person name="Leigh J.A."/>
        </authorList>
    </citation>
    <scope>NUCLEOTIDE SEQUENCE [LARGE SCALE GENOMIC DNA]</scope>
    <source>
        <strain>DSM 14266 / JCM 13030 / NBRC 101832 / S2 / LL</strain>
    </source>
</reference>